<reference key="1">
    <citation type="journal article" date="2008" name="BMC Genomics">
        <title>Genome sequence and rapid evolution of the rice pathogen Xanthomonas oryzae pv. oryzae PXO99A.</title>
        <authorList>
            <person name="Salzberg S.L."/>
            <person name="Sommer D.D."/>
            <person name="Schatz M.C."/>
            <person name="Phillippy A.M."/>
            <person name="Rabinowicz P.D."/>
            <person name="Tsuge S."/>
            <person name="Furutani A."/>
            <person name="Ochiai H."/>
            <person name="Delcher A.L."/>
            <person name="Kelley D."/>
            <person name="Madupu R."/>
            <person name="Puiu D."/>
            <person name="Radune D."/>
            <person name="Shumway M."/>
            <person name="Trapnell C."/>
            <person name="Aparna G."/>
            <person name="Jha G."/>
            <person name="Pandey A."/>
            <person name="Patil P.B."/>
            <person name="Ishihara H."/>
            <person name="Meyer D.F."/>
            <person name="Szurek B."/>
            <person name="Verdier V."/>
            <person name="Koebnik R."/>
            <person name="Dow J.M."/>
            <person name="Ryan R.P."/>
            <person name="Hirata H."/>
            <person name="Tsuyumu S."/>
            <person name="Won Lee S."/>
            <person name="Seo Y.-S."/>
            <person name="Sriariyanum M."/>
            <person name="Ronald P.C."/>
            <person name="Sonti R.V."/>
            <person name="Van Sluys M.-A."/>
            <person name="Leach J.E."/>
            <person name="White F.F."/>
            <person name="Bogdanove A.J."/>
        </authorList>
    </citation>
    <scope>NUCLEOTIDE SEQUENCE [LARGE SCALE GENOMIC DNA]</scope>
    <source>
        <strain>PXO99A</strain>
    </source>
</reference>
<name>RDGC_XANOP</name>
<accession>B2SIG8</accession>
<organism>
    <name type="scientific">Xanthomonas oryzae pv. oryzae (strain PXO99A)</name>
    <dbReference type="NCBI Taxonomy" id="360094"/>
    <lineage>
        <taxon>Bacteria</taxon>
        <taxon>Pseudomonadati</taxon>
        <taxon>Pseudomonadota</taxon>
        <taxon>Gammaproteobacteria</taxon>
        <taxon>Lysobacterales</taxon>
        <taxon>Lysobacteraceae</taxon>
        <taxon>Xanthomonas</taxon>
    </lineage>
</organism>
<comment type="function">
    <text evidence="1">May be involved in recombination.</text>
</comment>
<comment type="subcellular location">
    <subcellularLocation>
        <location evidence="1">Cytoplasm</location>
        <location evidence="1">Nucleoid</location>
    </subcellularLocation>
</comment>
<comment type="similarity">
    <text evidence="1">Belongs to the RdgC family.</text>
</comment>
<sequence length="301" mass="33386">MFFRNLTLFRFPTTLDFSQIDTLLPPVQLKPVGPLEMSSRGFISPFGRDEQGVLSHRLEDFLWLTVGGEDKILPGAVVNDLLERKVAEIEEKEGRRPSGKARKRLKDDLIHELLPRAFVKSSRTDAILDLQHGYIAVNSSSRKSGENVMSEIRGALGSFPALPLNAEVAPRAILTGWIAGEPLPEGLSLGEECEMKDPIEGGAVVKCQHQELRGDEIDKHLEAGKQVTKLALVLDDNLSFVLGDDLVIRKLKFLDGALDQLEHSEDDGARAELDARFTLMSAEIRRLFLLLETALKLSKAE</sequence>
<protein>
    <recommendedName>
        <fullName evidence="1">Recombination-associated protein RdgC</fullName>
    </recommendedName>
</protein>
<evidence type="ECO:0000255" key="1">
    <source>
        <dbReference type="HAMAP-Rule" id="MF_00194"/>
    </source>
</evidence>
<feature type="chain" id="PRO_1000099077" description="Recombination-associated protein RdgC">
    <location>
        <begin position="1"/>
        <end position="301"/>
    </location>
</feature>
<dbReference type="EMBL" id="CP000967">
    <property type="protein sequence ID" value="ACD57029.1"/>
    <property type="molecule type" value="Genomic_DNA"/>
</dbReference>
<dbReference type="RefSeq" id="WP_011260701.1">
    <property type="nucleotide sequence ID" value="NC_010717.2"/>
</dbReference>
<dbReference type="SMR" id="B2SIG8"/>
<dbReference type="KEGG" id="xop:PXO_03845"/>
<dbReference type="eggNOG" id="COG2974">
    <property type="taxonomic scope" value="Bacteria"/>
</dbReference>
<dbReference type="HOGENOM" id="CLU_052038_1_1_6"/>
<dbReference type="Proteomes" id="UP000001740">
    <property type="component" value="Chromosome"/>
</dbReference>
<dbReference type="GO" id="GO:0043590">
    <property type="term" value="C:bacterial nucleoid"/>
    <property type="evidence" value="ECO:0007669"/>
    <property type="project" value="TreeGrafter"/>
</dbReference>
<dbReference type="GO" id="GO:0005737">
    <property type="term" value="C:cytoplasm"/>
    <property type="evidence" value="ECO:0007669"/>
    <property type="project" value="UniProtKB-UniRule"/>
</dbReference>
<dbReference type="GO" id="GO:0003690">
    <property type="term" value="F:double-stranded DNA binding"/>
    <property type="evidence" value="ECO:0007669"/>
    <property type="project" value="TreeGrafter"/>
</dbReference>
<dbReference type="GO" id="GO:0006310">
    <property type="term" value="P:DNA recombination"/>
    <property type="evidence" value="ECO:0007669"/>
    <property type="project" value="UniProtKB-UniRule"/>
</dbReference>
<dbReference type="GO" id="GO:0000018">
    <property type="term" value="P:regulation of DNA recombination"/>
    <property type="evidence" value="ECO:0007669"/>
    <property type="project" value="TreeGrafter"/>
</dbReference>
<dbReference type="HAMAP" id="MF_00194">
    <property type="entry name" value="RdgC"/>
    <property type="match status" value="1"/>
</dbReference>
<dbReference type="InterPro" id="IPR007476">
    <property type="entry name" value="RdgC"/>
</dbReference>
<dbReference type="NCBIfam" id="NF001464">
    <property type="entry name" value="PRK00321.1-5"/>
    <property type="match status" value="1"/>
</dbReference>
<dbReference type="NCBIfam" id="NF001465">
    <property type="entry name" value="PRK00321.1-6"/>
    <property type="match status" value="1"/>
</dbReference>
<dbReference type="PANTHER" id="PTHR38103">
    <property type="entry name" value="RECOMBINATION-ASSOCIATED PROTEIN RDGC"/>
    <property type="match status" value="1"/>
</dbReference>
<dbReference type="PANTHER" id="PTHR38103:SF1">
    <property type="entry name" value="RECOMBINATION-ASSOCIATED PROTEIN RDGC"/>
    <property type="match status" value="1"/>
</dbReference>
<dbReference type="Pfam" id="PF04381">
    <property type="entry name" value="RdgC"/>
    <property type="match status" value="1"/>
</dbReference>
<gene>
    <name evidence="1" type="primary">rdgC</name>
    <name type="ordered locus">PXO_03845</name>
</gene>
<keyword id="KW-0963">Cytoplasm</keyword>
<keyword id="KW-0233">DNA recombination</keyword>
<proteinExistence type="inferred from homology"/>